<comment type="function">
    <text evidence="1">Down-regulates transcriptional activation by nuclear receptors such as NR1F2.</text>
</comment>
<comment type="subunit">
    <text evidence="1">Interacts with NR1F2, RARA and THRB in a ligand-dependent manner.</text>
</comment>
<comment type="interaction">
    <interactant intactId="EBI-3913975">
        <id>Q9BQI9</id>
    </interactant>
    <interactant intactId="EBI-744695">
        <id>Q8N9N5</id>
        <label>BANP</label>
    </interactant>
    <organismsDiffer>false</organismsDiffer>
    <experiments>3</experiments>
</comment>
<comment type="interaction">
    <interactant intactId="EBI-3913975">
        <id>Q9BQI9</id>
    </interactant>
    <interactant intactId="EBI-11524452">
        <id>Q8N9N5-2</id>
        <label>BANP</label>
    </interactant>
    <organismsDiffer>false</organismsDiffer>
    <experiments>3</experiments>
</comment>
<comment type="interaction">
    <interactant intactId="EBI-3913975">
        <id>Q9BQI9</id>
    </interactant>
    <interactant intactId="EBI-12094670">
        <id>Q8WUI4-6</id>
        <label>HDAC7</label>
    </interactant>
    <organismsDiffer>false</organismsDiffer>
    <experiments>6</experiments>
</comment>
<comment type="interaction">
    <interactant intactId="EBI-3913975">
        <id>Q9BQI9</id>
    </interactant>
    <interactant intactId="EBI-7254550">
        <id>P36508</id>
        <label>ZNF76</label>
    </interactant>
    <organismsDiffer>false</organismsDiffer>
    <experiments>3</experiments>
</comment>
<comment type="subcellular location">
    <subcellularLocation>
        <location evidence="1">Nucleus</location>
    </subcellularLocation>
</comment>
<comment type="alternative products">
    <event type="alternative splicing"/>
    <isoform>
        <id>Q9BQI9-1</id>
        <name>1</name>
        <sequence type="displayed"/>
    </isoform>
    <isoform>
        <id>Q9BQI9-2</id>
        <name>2</name>
        <sequence type="described" ref="VSP_053930"/>
    </isoform>
</comment>
<name>NRIP2_HUMAN</name>
<feature type="chain" id="PRO_0000271056" description="Nuclear receptor-interacting protein 2">
    <location>
        <begin position="1"/>
        <end position="281"/>
    </location>
</feature>
<feature type="region of interest" description="Disordered" evidence="2">
    <location>
        <begin position="18"/>
        <end position="85"/>
    </location>
</feature>
<feature type="short sequence motif" description="LXXLL motif">
    <location>
        <begin position="244"/>
        <end position="248"/>
    </location>
</feature>
<feature type="compositionally biased region" description="Pro residues" evidence="2">
    <location>
        <begin position="36"/>
        <end position="47"/>
    </location>
</feature>
<feature type="compositionally biased region" description="Basic and acidic residues" evidence="2">
    <location>
        <begin position="55"/>
        <end position="78"/>
    </location>
</feature>
<feature type="splice variant" id="VSP_053930" description="In isoform 2." evidence="3">
    <location>
        <begin position="81"/>
        <end position="91"/>
    </location>
</feature>
<feature type="sequence conflict" description="In Ref. 2; BAG62573." evidence="4" ref="2">
    <original>R</original>
    <variation>K</variation>
    <location>
        <position position="29"/>
    </location>
</feature>
<feature type="sequence conflict" description="In Ref. 2; BAG62573." evidence="4" ref="2">
    <original>G</original>
    <variation>S</variation>
    <location>
        <position position="243"/>
    </location>
</feature>
<dbReference type="EMBL" id="AL136557">
    <property type="protein sequence ID" value="CAB66492.1"/>
    <property type="molecule type" value="mRNA"/>
</dbReference>
<dbReference type="EMBL" id="AK098063">
    <property type="protein sequence ID" value="BAG53573.1"/>
    <property type="molecule type" value="mRNA"/>
</dbReference>
<dbReference type="EMBL" id="AK300944">
    <property type="protein sequence ID" value="BAG62573.1"/>
    <property type="molecule type" value="mRNA"/>
</dbReference>
<dbReference type="EMBL" id="AC005841">
    <property type="status" value="NOT_ANNOTATED_CDS"/>
    <property type="molecule type" value="Genomic_DNA"/>
</dbReference>
<dbReference type="EMBL" id="CH471116">
    <property type="protein sequence ID" value="EAW88888.1"/>
    <property type="molecule type" value="Genomic_DNA"/>
</dbReference>
<dbReference type="EMBL" id="BC036063">
    <property type="protein sequence ID" value="AAH36063.1"/>
    <property type="molecule type" value="mRNA"/>
</dbReference>
<dbReference type="EMBL" id="BC131562">
    <property type="protein sequence ID" value="AAI31563.1"/>
    <property type="molecule type" value="mRNA"/>
</dbReference>
<dbReference type="CCDS" id="CCDS8514.1">
    <molecule id="Q9BQI9-1"/>
</dbReference>
<dbReference type="RefSeq" id="NP_113662.1">
    <molecule id="Q9BQI9-1"/>
    <property type="nucleotide sequence ID" value="NM_031474.3"/>
</dbReference>
<dbReference type="RefSeq" id="XP_005253854.1">
    <property type="nucleotide sequence ID" value="XM_005253797.3"/>
</dbReference>
<dbReference type="SMR" id="Q9BQI9"/>
<dbReference type="BioGRID" id="123737">
    <property type="interactions" value="7"/>
</dbReference>
<dbReference type="CORUM" id="Q9BQI9"/>
<dbReference type="FunCoup" id="Q9BQI9">
    <property type="interactions" value="279"/>
</dbReference>
<dbReference type="IntAct" id="Q9BQI9">
    <property type="interactions" value="6"/>
</dbReference>
<dbReference type="MINT" id="Q9BQI9"/>
<dbReference type="STRING" id="9606.ENSP00000337501"/>
<dbReference type="MEROPS" id="A28.A10"/>
<dbReference type="GlyGen" id="Q9BQI9">
    <property type="glycosylation" value="2 sites, 1 O-linked glycan (1 site)"/>
</dbReference>
<dbReference type="iPTMnet" id="Q9BQI9"/>
<dbReference type="PhosphoSitePlus" id="Q9BQI9"/>
<dbReference type="BioMuta" id="NRIP2"/>
<dbReference type="DMDM" id="251757451"/>
<dbReference type="MassIVE" id="Q9BQI9"/>
<dbReference type="PaxDb" id="9606-ENSP00000337501"/>
<dbReference type="PeptideAtlas" id="Q9BQI9"/>
<dbReference type="ProteomicsDB" id="78692">
    <molecule id="Q9BQI9-1"/>
</dbReference>
<dbReference type="Antibodypedia" id="22178">
    <property type="antibodies" value="202 antibodies from 25 providers"/>
</dbReference>
<dbReference type="DNASU" id="83714"/>
<dbReference type="Ensembl" id="ENST00000337508.9">
    <molecule id="Q9BQI9-1"/>
    <property type="protein sequence ID" value="ENSP00000337501.4"/>
    <property type="gene ID" value="ENSG00000053702.15"/>
</dbReference>
<dbReference type="GeneID" id="83714"/>
<dbReference type="KEGG" id="hsa:83714"/>
<dbReference type="MANE-Select" id="ENST00000337508.9">
    <property type="protein sequence ID" value="ENSP00000337501.4"/>
    <property type="RefSeq nucleotide sequence ID" value="NM_031474.3"/>
    <property type="RefSeq protein sequence ID" value="NP_113662.1"/>
</dbReference>
<dbReference type="UCSC" id="uc001qlc.4">
    <molecule id="Q9BQI9-1"/>
    <property type="organism name" value="human"/>
</dbReference>
<dbReference type="AGR" id="HGNC:23078"/>
<dbReference type="CTD" id="83714"/>
<dbReference type="DisGeNET" id="83714"/>
<dbReference type="GeneCards" id="NRIP2"/>
<dbReference type="HGNC" id="HGNC:23078">
    <property type="gene designation" value="NRIP2"/>
</dbReference>
<dbReference type="HPA" id="ENSG00000053702">
    <property type="expression patterns" value="Tissue enriched (brain)"/>
</dbReference>
<dbReference type="MIM" id="621054">
    <property type="type" value="gene"/>
</dbReference>
<dbReference type="neXtProt" id="NX_Q9BQI9"/>
<dbReference type="OpenTargets" id="ENSG00000053702"/>
<dbReference type="PharmGKB" id="PA134978127"/>
<dbReference type="VEuPathDB" id="HostDB:ENSG00000053702"/>
<dbReference type="eggNOG" id="KOG0012">
    <property type="taxonomic scope" value="Eukaryota"/>
</dbReference>
<dbReference type="GeneTree" id="ENSGT00950000182999"/>
<dbReference type="HOGENOM" id="CLU_087166_0_0_1"/>
<dbReference type="InParanoid" id="Q9BQI9"/>
<dbReference type="OMA" id="PSCWKES"/>
<dbReference type="OrthoDB" id="1047367at2759"/>
<dbReference type="PAN-GO" id="Q9BQI9">
    <property type="GO annotations" value="0 GO annotations based on evolutionary models"/>
</dbReference>
<dbReference type="PhylomeDB" id="Q9BQI9"/>
<dbReference type="TreeFam" id="TF333421"/>
<dbReference type="PathwayCommons" id="Q9BQI9"/>
<dbReference type="SignaLink" id="Q9BQI9"/>
<dbReference type="BioGRID-ORCS" id="83714">
    <property type="hits" value="15 hits in 1152 CRISPR screens"/>
</dbReference>
<dbReference type="GeneWiki" id="NRIP2"/>
<dbReference type="GenomeRNAi" id="83714"/>
<dbReference type="Pharos" id="Q9BQI9">
    <property type="development level" value="Tdark"/>
</dbReference>
<dbReference type="PRO" id="PR:Q9BQI9"/>
<dbReference type="Proteomes" id="UP000005640">
    <property type="component" value="Chromosome 12"/>
</dbReference>
<dbReference type="RNAct" id="Q9BQI9">
    <property type="molecule type" value="protein"/>
</dbReference>
<dbReference type="Bgee" id="ENSG00000053702">
    <property type="expression patterns" value="Expressed in olfactory bulb and 147 other cell types or tissues"/>
</dbReference>
<dbReference type="ExpressionAtlas" id="Q9BQI9">
    <property type="expression patterns" value="baseline and differential"/>
</dbReference>
<dbReference type="GO" id="GO:0005737">
    <property type="term" value="C:cytoplasm"/>
    <property type="evidence" value="ECO:0000314"/>
    <property type="project" value="LIFEdb"/>
</dbReference>
<dbReference type="GO" id="GO:0005634">
    <property type="term" value="C:nucleus"/>
    <property type="evidence" value="ECO:0007669"/>
    <property type="project" value="UniProtKB-SubCell"/>
</dbReference>
<dbReference type="GO" id="GO:0004190">
    <property type="term" value="F:aspartic-type endopeptidase activity"/>
    <property type="evidence" value="ECO:0007669"/>
    <property type="project" value="InterPro"/>
</dbReference>
<dbReference type="GO" id="GO:0000122">
    <property type="term" value="P:negative regulation of transcription by RNA polymerase II"/>
    <property type="evidence" value="ECO:0007669"/>
    <property type="project" value="Ensembl"/>
</dbReference>
<dbReference type="GO" id="GO:0007219">
    <property type="term" value="P:Notch signaling pathway"/>
    <property type="evidence" value="ECO:0007669"/>
    <property type="project" value="Ensembl"/>
</dbReference>
<dbReference type="GO" id="GO:0006508">
    <property type="term" value="P:proteolysis"/>
    <property type="evidence" value="ECO:0007669"/>
    <property type="project" value="InterPro"/>
</dbReference>
<dbReference type="CDD" id="cd05480">
    <property type="entry name" value="NRIP_C"/>
    <property type="match status" value="1"/>
</dbReference>
<dbReference type="FunFam" id="2.40.70.10:FF:000245">
    <property type="entry name" value="Nuclear receptor interacting protein 2"/>
    <property type="match status" value="1"/>
</dbReference>
<dbReference type="Gene3D" id="2.40.70.10">
    <property type="entry name" value="Acid Proteases"/>
    <property type="match status" value="1"/>
</dbReference>
<dbReference type="InterPro" id="IPR033821">
    <property type="entry name" value="NRIP_C"/>
</dbReference>
<dbReference type="InterPro" id="IPR019103">
    <property type="entry name" value="Peptidase_aspartic_DDI1-type"/>
</dbReference>
<dbReference type="InterPro" id="IPR021109">
    <property type="entry name" value="Peptidase_aspartic_dom_sf"/>
</dbReference>
<dbReference type="PANTHER" id="PTHR12917">
    <property type="entry name" value="ASPARTYL PROTEASE DDI-RELATED"/>
    <property type="match status" value="1"/>
</dbReference>
<dbReference type="PANTHER" id="PTHR12917:SF17">
    <property type="entry name" value="NUCLEAR RECEPTOR-INTERACTING PROTEIN 2"/>
    <property type="match status" value="1"/>
</dbReference>
<dbReference type="Pfam" id="PF09668">
    <property type="entry name" value="Asp_protease"/>
    <property type="match status" value="1"/>
</dbReference>
<dbReference type="SUPFAM" id="SSF50630">
    <property type="entry name" value="Acid proteases"/>
    <property type="match status" value="1"/>
</dbReference>
<sequence>MLFIFPLSLPWRPSCWKESCSTGQRQAGRSREDSVTPPPSSPWPTPPAGAMSTKQEARRDEGEARTRGQEAQLRDRAHLSQQRRLKQATQFLHKDSADLLPLDSLKRLGTSKDLQPRSVIQRRLVEGNPNWLQGEPPRMQDLIHGQESRRKTSRTEIPALLVNCKCQDQLLRVAVDTGTQYNRISAGCLSRLGLEKRVLKASAGDLAPGPPTQVEQLELQLGQETVVCSAQVVDAESPEFCLGLQTLLSLKCCIDLEHGVLRLKAPFSELPFLPLYQEPGQ</sequence>
<reference key="1">
    <citation type="journal article" date="2001" name="Genome Res.">
        <title>Towards a catalog of human genes and proteins: sequencing and analysis of 500 novel complete protein coding human cDNAs.</title>
        <authorList>
            <person name="Wiemann S."/>
            <person name="Weil B."/>
            <person name="Wellenreuther R."/>
            <person name="Gassenhuber J."/>
            <person name="Glassl S."/>
            <person name="Ansorge W."/>
            <person name="Boecher M."/>
            <person name="Bloecker H."/>
            <person name="Bauersachs S."/>
            <person name="Blum H."/>
            <person name="Lauber J."/>
            <person name="Duesterhoeft A."/>
            <person name="Beyer A."/>
            <person name="Koehrer K."/>
            <person name="Strack N."/>
            <person name="Mewes H.-W."/>
            <person name="Ottenwaelder B."/>
            <person name="Obermaier B."/>
            <person name="Tampe J."/>
            <person name="Heubner D."/>
            <person name="Wambutt R."/>
            <person name="Korn B."/>
            <person name="Klein M."/>
            <person name="Poustka A."/>
        </authorList>
    </citation>
    <scope>NUCLEOTIDE SEQUENCE [LARGE SCALE MRNA] (ISOFORM 1)</scope>
    <source>
        <tissue>Amygdala</tissue>
    </source>
</reference>
<reference key="2">
    <citation type="journal article" date="2004" name="Nat. Genet.">
        <title>Complete sequencing and characterization of 21,243 full-length human cDNAs.</title>
        <authorList>
            <person name="Ota T."/>
            <person name="Suzuki Y."/>
            <person name="Nishikawa T."/>
            <person name="Otsuki T."/>
            <person name="Sugiyama T."/>
            <person name="Irie R."/>
            <person name="Wakamatsu A."/>
            <person name="Hayashi K."/>
            <person name="Sato H."/>
            <person name="Nagai K."/>
            <person name="Kimura K."/>
            <person name="Makita H."/>
            <person name="Sekine M."/>
            <person name="Obayashi M."/>
            <person name="Nishi T."/>
            <person name="Shibahara T."/>
            <person name="Tanaka T."/>
            <person name="Ishii S."/>
            <person name="Yamamoto J."/>
            <person name="Saito K."/>
            <person name="Kawai Y."/>
            <person name="Isono Y."/>
            <person name="Nakamura Y."/>
            <person name="Nagahari K."/>
            <person name="Murakami K."/>
            <person name="Yasuda T."/>
            <person name="Iwayanagi T."/>
            <person name="Wagatsuma M."/>
            <person name="Shiratori A."/>
            <person name="Sudo H."/>
            <person name="Hosoiri T."/>
            <person name="Kaku Y."/>
            <person name="Kodaira H."/>
            <person name="Kondo H."/>
            <person name="Sugawara M."/>
            <person name="Takahashi M."/>
            <person name="Kanda K."/>
            <person name="Yokoi T."/>
            <person name="Furuya T."/>
            <person name="Kikkawa E."/>
            <person name="Omura Y."/>
            <person name="Abe K."/>
            <person name="Kamihara K."/>
            <person name="Katsuta N."/>
            <person name="Sato K."/>
            <person name="Tanikawa M."/>
            <person name="Yamazaki M."/>
            <person name="Ninomiya K."/>
            <person name="Ishibashi T."/>
            <person name="Yamashita H."/>
            <person name="Murakawa K."/>
            <person name="Fujimori K."/>
            <person name="Tanai H."/>
            <person name="Kimata M."/>
            <person name="Watanabe M."/>
            <person name="Hiraoka S."/>
            <person name="Chiba Y."/>
            <person name="Ishida S."/>
            <person name="Ono Y."/>
            <person name="Takiguchi S."/>
            <person name="Watanabe S."/>
            <person name="Yosida M."/>
            <person name="Hotuta T."/>
            <person name="Kusano J."/>
            <person name="Kanehori K."/>
            <person name="Takahashi-Fujii A."/>
            <person name="Hara H."/>
            <person name="Tanase T.-O."/>
            <person name="Nomura Y."/>
            <person name="Togiya S."/>
            <person name="Komai F."/>
            <person name="Hara R."/>
            <person name="Takeuchi K."/>
            <person name="Arita M."/>
            <person name="Imose N."/>
            <person name="Musashino K."/>
            <person name="Yuuki H."/>
            <person name="Oshima A."/>
            <person name="Sasaki N."/>
            <person name="Aotsuka S."/>
            <person name="Yoshikawa Y."/>
            <person name="Matsunawa H."/>
            <person name="Ichihara T."/>
            <person name="Shiohata N."/>
            <person name="Sano S."/>
            <person name="Moriya S."/>
            <person name="Momiyama H."/>
            <person name="Satoh N."/>
            <person name="Takami S."/>
            <person name="Terashima Y."/>
            <person name="Suzuki O."/>
            <person name="Nakagawa S."/>
            <person name="Senoh A."/>
            <person name="Mizoguchi H."/>
            <person name="Goto Y."/>
            <person name="Shimizu F."/>
            <person name="Wakebe H."/>
            <person name="Hishigaki H."/>
            <person name="Watanabe T."/>
            <person name="Sugiyama A."/>
            <person name="Takemoto M."/>
            <person name="Kawakami B."/>
            <person name="Yamazaki M."/>
            <person name="Watanabe K."/>
            <person name="Kumagai A."/>
            <person name="Itakura S."/>
            <person name="Fukuzumi Y."/>
            <person name="Fujimori Y."/>
            <person name="Komiyama M."/>
            <person name="Tashiro H."/>
            <person name="Tanigami A."/>
            <person name="Fujiwara T."/>
            <person name="Ono T."/>
            <person name="Yamada K."/>
            <person name="Fujii Y."/>
            <person name="Ozaki K."/>
            <person name="Hirao M."/>
            <person name="Ohmori Y."/>
            <person name="Kawabata A."/>
            <person name="Hikiji T."/>
            <person name="Kobatake N."/>
            <person name="Inagaki H."/>
            <person name="Ikema Y."/>
            <person name="Okamoto S."/>
            <person name="Okitani R."/>
            <person name="Kawakami T."/>
            <person name="Noguchi S."/>
            <person name="Itoh T."/>
            <person name="Shigeta K."/>
            <person name="Senba T."/>
            <person name="Matsumura K."/>
            <person name="Nakajima Y."/>
            <person name="Mizuno T."/>
            <person name="Morinaga M."/>
            <person name="Sasaki M."/>
            <person name="Togashi T."/>
            <person name="Oyama M."/>
            <person name="Hata H."/>
            <person name="Watanabe M."/>
            <person name="Komatsu T."/>
            <person name="Mizushima-Sugano J."/>
            <person name="Satoh T."/>
            <person name="Shirai Y."/>
            <person name="Takahashi Y."/>
            <person name="Nakagawa K."/>
            <person name="Okumura K."/>
            <person name="Nagase T."/>
            <person name="Nomura N."/>
            <person name="Kikuchi H."/>
            <person name="Masuho Y."/>
            <person name="Yamashita R."/>
            <person name="Nakai K."/>
            <person name="Yada T."/>
            <person name="Nakamura Y."/>
            <person name="Ohara O."/>
            <person name="Isogai T."/>
            <person name="Sugano S."/>
        </authorList>
    </citation>
    <scope>NUCLEOTIDE SEQUENCE [LARGE SCALE MRNA] (ISOFORMS 1 AND 2)</scope>
    <source>
        <tissue>Small intestine</tissue>
        <tissue>Trachea</tissue>
    </source>
</reference>
<reference key="3">
    <citation type="journal article" date="2006" name="Nature">
        <title>The finished DNA sequence of human chromosome 12.</title>
        <authorList>
            <person name="Scherer S.E."/>
            <person name="Muzny D.M."/>
            <person name="Buhay C.J."/>
            <person name="Chen R."/>
            <person name="Cree A."/>
            <person name="Ding Y."/>
            <person name="Dugan-Rocha S."/>
            <person name="Gill R."/>
            <person name="Gunaratne P."/>
            <person name="Harris R.A."/>
            <person name="Hawes A.C."/>
            <person name="Hernandez J."/>
            <person name="Hodgson A.V."/>
            <person name="Hume J."/>
            <person name="Jackson A."/>
            <person name="Khan Z.M."/>
            <person name="Kovar-Smith C."/>
            <person name="Lewis L.R."/>
            <person name="Lozado R.J."/>
            <person name="Metzker M.L."/>
            <person name="Milosavljevic A."/>
            <person name="Miner G.R."/>
            <person name="Montgomery K.T."/>
            <person name="Morgan M.B."/>
            <person name="Nazareth L.V."/>
            <person name="Scott G."/>
            <person name="Sodergren E."/>
            <person name="Song X.-Z."/>
            <person name="Steffen D."/>
            <person name="Lovering R.C."/>
            <person name="Wheeler D.A."/>
            <person name="Worley K.C."/>
            <person name="Yuan Y."/>
            <person name="Zhang Z."/>
            <person name="Adams C.Q."/>
            <person name="Ansari-Lari M.A."/>
            <person name="Ayele M."/>
            <person name="Brown M.J."/>
            <person name="Chen G."/>
            <person name="Chen Z."/>
            <person name="Clerc-Blankenburg K.P."/>
            <person name="Davis C."/>
            <person name="Delgado O."/>
            <person name="Dinh H.H."/>
            <person name="Draper H."/>
            <person name="Gonzalez-Garay M.L."/>
            <person name="Havlak P."/>
            <person name="Jackson L.R."/>
            <person name="Jacob L.S."/>
            <person name="Kelly S.H."/>
            <person name="Li L."/>
            <person name="Li Z."/>
            <person name="Liu J."/>
            <person name="Liu W."/>
            <person name="Lu J."/>
            <person name="Maheshwari M."/>
            <person name="Nguyen B.-V."/>
            <person name="Okwuonu G.O."/>
            <person name="Pasternak S."/>
            <person name="Perez L.M."/>
            <person name="Plopper F.J.H."/>
            <person name="Santibanez J."/>
            <person name="Shen H."/>
            <person name="Tabor P.E."/>
            <person name="Verduzco D."/>
            <person name="Waldron L."/>
            <person name="Wang Q."/>
            <person name="Williams G.A."/>
            <person name="Zhang J."/>
            <person name="Zhou J."/>
            <person name="Allen C.C."/>
            <person name="Amin A.G."/>
            <person name="Anyalebechi V."/>
            <person name="Bailey M."/>
            <person name="Barbaria J.A."/>
            <person name="Bimage K.E."/>
            <person name="Bryant N.P."/>
            <person name="Burch P.E."/>
            <person name="Burkett C.E."/>
            <person name="Burrell K.L."/>
            <person name="Calderon E."/>
            <person name="Cardenas V."/>
            <person name="Carter K."/>
            <person name="Casias K."/>
            <person name="Cavazos I."/>
            <person name="Cavazos S.R."/>
            <person name="Ceasar H."/>
            <person name="Chacko J."/>
            <person name="Chan S.N."/>
            <person name="Chavez D."/>
            <person name="Christopoulos C."/>
            <person name="Chu J."/>
            <person name="Cockrell R."/>
            <person name="Cox C.D."/>
            <person name="Dang M."/>
            <person name="Dathorne S.R."/>
            <person name="David R."/>
            <person name="Davis C.M."/>
            <person name="Davy-Carroll L."/>
            <person name="Deshazo D.R."/>
            <person name="Donlin J.E."/>
            <person name="D'Souza L."/>
            <person name="Eaves K.A."/>
            <person name="Egan A."/>
            <person name="Emery-Cohen A.J."/>
            <person name="Escotto M."/>
            <person name="Flagg N."/>
            <person name="Forbes L.D."/>
            <person name="Gabisi A.M."/>
            <person name="Garza M."/>
            <person name="Hamilton C."/>
            <person name="Henderson N."/>
            <person name="Hernandez O."/>
            <person name="Hines S."/>
            <person name="Hogues M.E."/>
            <person name="Huang M."/>
            <person name="Idlebird D.G."/>
            <person name="Johnson R."/>
            <person name="Jolivet A."/>
            <person name="Jones S."/>
            <person name="Kagan R."/>
            <person name="King L.M."/>
            <person name="Leal B."/>
            <person name="Lebow H."/>
            <person name="Lee S."/>
            <person name="LeVan J.M."/>
            <person name="Lewis L.C."/>
            <person name="London P."/>
            <person name="Lorensuhewa L.M."/>
            <person name="Loulseged H."/>
            <person name="Lovett D.A."/>
            <person name="Lucier A."/>
            <person name="Lucier R.L."/>
            <person name="Ma J."/>
            <person name="Madu R.C."/>
            <person name="Mapua P."/>
            <person name="Martindale A.D."/>
            <person name="Martinez E."/>
            <person name="Massey E."/>
            <person name="Mawhiney S."/>
            <person name="Meador M.G."/>
            <person name="Mendez S."/>
            <person name="Mercado C."/>
            <person name="Mercado I.C."/>
            <person name="Merritt C.E."/>
            <person name="Miner Z.L."/>
            <person name="Minja E."/>
            <person name="Mitchell T."/>
            <person name="Mohabbat F."/>
            <person name="Mohabbat K."/>
            <person name="Montgomery B."/>
            <person name="Moore N."/>
            <person name="Morris S."/>
            <person name="Munidasa M."/>
            <person name="Ngo R.N."/>
            <person name="Nguyen N.B."/>
            <person name="Nickerson E."/>
            <person name="Nwaokelemeh O.O."/>
            <person name="Nwokenkwo S."/>
            <person name="Obregon M."/>
            <person name="Oguh M."/>
            <person name="Oragunye N."/>
            <person name="Oviedo R.J."/>
            <person name="Parish B.J."/>
            <person name="Parker D.N."/>
            <person name="Parrish J."/>
            <person name="Parks K.L."/>
            <person name="Paul H.A."/>
            <person name="Payton B.A."/>
            <person name="Perez A."/>
            <person name="Perrin W."/>
            <person name="Pickens A."/>
            <person name="Primus E.L."/>
            <person name="Pu L.-L."/>
            <person name="Puazo M."/>
            <person name="Quiles M.M."/>
            <person name="Quiroz J.B."/>
            <person name="Rabata D."/>
            <person name="Reeves K."/>
            <person name="Ruiz S.J."/>
            <person name="Shao H."/>
            <person name="Sisson I."/>
            <person name="Sonaike T."/>
            <person name="Sorelle R.P."/>
            <person name="Sutton A.E."/>
            <person name="Svatek A.F."/>
            <person name="Svetz L.A."/>
            <person name="Tamerisa K.S."/>
            <person name="Taylor T.R."/>
            <person name="Teague B."/>
            <person name="Thomas N."/>
            <person name="Thorn R.D."/>
            <person name="Trejos Z.Y."/>
            <person name="Trevino B.K."/>
            <person name="Ukegbu O.N."/>
            <person name="Urban J.B."/>
            <person name="Vasquez L.I."/>
            <person name="Vera V.A."/>
            <person name="Villasana D.M."/>
            <person name="Wang L."/>
            <person name="Ward-Moore S."/>
            <person name="Warren J.T."/>
            <person name="Wei X."/>
            <person name="White F."/>
            <person name="Williamson A.L."/>
            <person name="Wleczyk R."/>
            <person name="Wooden H.S."/>
            <person name="Wooden S.H."/>
            <person name="Yen J."/>
            <person name="Yoon L."/>
            <person name="Yoon V."/>
            <person name="Zorrilla S.E."/>
            <person name="Nelson D."/>
            <person name="Kucherlapati R."/>
            <person name="Weinstock G."/>
            <person name="Gibbs R.A."/>
        </authorList>
    </citation>
    <scope>NUCLEOTIDE SEQUENCE [LARGE SCALE GENOMIC DNA]</scope>
</reference>
<reference key="4">
    <citation type="submission" date="2005-09" db="EMBL/GenBank/DDBJ databases">
        <authorList>
            <person name="Mural R.J."/>
            <person name="Istrail S."/>
            <person name="Sutton G."/>
            <person name="Florea L."/>
            <person name="Halpern A.L."/>
            <person name="Mobarry C.M."/>
            <person name="Lippert R."/>
            <person name="Walenz B."/>
            <person name="Shatkay H."/>
            <person name="Dew I."/>
            <person name="Miller J.R."/>
            <person name="Flanigan M.J."/>
            <person name="Edwards N.J."/>
            <person name="Bolanos R."/>
            <person name="Fasulo D."/>
            <person name="Halldorsson B.V."/>
            <person name="Hannenhalli S."/>
            <person name="Turner R."/>
            <person name="Yooseph S."/>
            <person name="Lu F."/>
            <person name="Nusskern D.R."/>
            <person name="Shue B.C."/>
            <person name="Zheng X.H."/>
            <person name="Zhong F."/>
            <person name="Delcher A.L."/>
            <person name="Huson D.H."/>
            <person name="Kravitz S.A."/>
            <person name="Mouchard L."/>
            <person name="Reinert K."/>
            <person name="Remington K.A."/>
            <person name="Clark A.G."/>
            <person name="Waterman M.S."/>
            <person name="Eichler E.E."/>
            <person name="Adams M.D."/>
            <person name="Hunkapiller M.W."/>
            <person name="Myers E.W."/>
            <person name="Venter J.C."/>
        </authorList>
    </citation>
    <scope>NUCLEOTIDE SEQUENCE [LARGE SCALE GENOMIC DNA]</scope>
</reference>
<reference key="5">
    <citation type="journal article" date="2004" name="Genome Res.">
        <title>The status, quality, and expansion of the NIH full-length cDNA project: the Mammalian Gene Collection (MGC).</title>
        <authorList>
            <consortium name="The MGC Project Team"/>
        </authorList>
    </citation>
    <scope>NUCLEOTIDE SEQUENCE [LARGE SCALE MRNA] (ISOFORM 1)</scope>
    <source>
        <tissue>Brain</tissue>
    </source>
</reference>
<organism>
    <name type="scientific">Homo sapiens</name>
    <name type="common">Human</name>
    <dbReference type="NCBI Taxonomy" id="9606"/>
    <lineage>
        <taxon>Eukaryota</taxon>
        <taxon>Metazoa</taxon>
        <taxon>Chordata</taxon>
        <taxon>Craniata</taxon>
        <taxon>Vertebrata</taxon>
        <taxon>Euteleostomi</taxon>
        <taxon>Mammalia</taxon>
        <taxon>Eutheria</taxon>
        <taxon>Euarchontoglires</taxon>
        <taxon>Primates</taxon>
        <taxon>Haplorrhini</taxon>
        <taxon>Catarrhini</taxon>
        <taxon>Hominidae</taxon>
        <taxon>Homo</taxon>
    </lineage>
</organism>
<gene>
    <name type="primary">NRIP2</name>
</gene>
<evidence type="ECO:0000250" key="1"/>
<evidence type="ECO:0000256" key="2">
    <source>
        <dbReference type="SAM" id="MobiDB-lite"/>
    </source>
</evidence>
<evidence type="ECO:0000303" key="3">
    <source>
    </source>
</evidence>
<evidence type="ECO:0000305" key="4"/>
<protein>
    <recommendedName>
        <fullName>Nuclear receptor-interacting protein 2</fullName>
    </recommendedName>
</protein>
<proteinExistence type="evidence at protein level"/>
<keyword id="KW-0025">Alternative splicing</keyword>
<keyword id="KW-0539">Nucleus</keyword>
<keyword id="KW-1267">Proteomics identification</keyword>
<keyword id="KW-1185">Reference proteome</keyword>
<keyword id="KW-0804">Transcription</keyword>
<keyword id="KW-0805">Transcription regulation</keyword>
<accession>Q9BQI9</accession>
<accession>A2RRE3</accession>
<accession>B4DV61</accession>